<protein>
    <recommendedName>
        <fullName>Endonuclease segA</fullName>
        <ecNumber>3.1.-.-</ecNumber>
    </recommendedName>
    <alternativeName>
        <fullName>Endodeoxyribonuclease segA</fullName>
    </alternativeName>
</protein>
<comment type="function">
    <text>Probably involved in the movement of the endonuclease-encoding DNA.</text>
</comment>
<comment type="cofactor">
    <cofactor>
        <name>Mg(2+)</name>
        <dbReference type="ChEBI" id="CHEBI:18420"/>
    </cofactor>
</comment>
<comment type="similarity">
    <text evidence="3">To endonucleases of group I introns of fungi and phage.</text>
</comment>
<sequence>MKRHKEKKYNYTYVITNLVNNKIYYGTHSTDDLNDGYMGSGTLLAQAKKKYGKKNFNLSILGFYKDFKSARDAERELVTIDVVNDPMTYNLKIGGEGGRRIGYRVSSETKEKISKAQKGKPKHLGFSDVCRKAQLGKKQSEETKAKRKEALLNNPYGYNRNKPSHKRDPIMWDNIEKIKEIWENSGKSGAIKLKKLAIEAGFPNKSYARMLEVFRGTRTLL</sequence>
<feature type="chain" id="PRO_0000164980" description="Endonuclease segA">
    <location>
        <begin position="1"/>
        <end position="221"/>
    </location>
</feature>
<feature type="domain" description="GIY-YIG" evidence="1">
    <location>
        <begin position="8"/>
        <end position="91"/>
    </location>
</feature>
<feature type="region of interest" description="Disordered" evidence="2">
    <location>
        <begin position="137"/>
        <end position="164"/>
    </location>
</feature>
<feature type="compositionally biased region" description="Basic and acidic residues" evidence="2">
    <location>
        <begin position="138"/>
        <end position="150"/>
    </location>
</feature>
<organismHost>
    <name type="scientific">Escherichia coli</name>
    <dbReference type="NCBI Taxonomy" id="562"/>
</organismHost>
<accession>P32286</accession>
<gene>
    <name type="primary">segA</name>
</gene>
<evidence type="ECO:0000255" key="1">
    <source>
        <dbReference type="PROSITE-ProRule" id="PRU00977"/>
    </source>
</evidence>
<evidence type="ECO:0000256" key="2">
    <source>
        <dbReference type="SAM" id="MobiDB-lite"/>
    </source>
</evidence>
<evidence type="ECO:0000305" key="3"/>
<proteinExistence type="predicted"/>
<reference key="1">
    <citation type="journal article" date="1992" name="Proc. Natl. Acad. Sci. U.S.A.">
        <title>Identification of a family of bacteriophage T4 genes encoding proteins similar to those present in group I introns of fungi and phage.</title>
        <authorList>
            <person name="Sharma M."/>
            <person name="Ellis R.L."/>
            <person name="Hinton D.M."/>
        </authorList>
    </citation>
    <scope>NUCLEOTIDE SEQUENCE [GENOMIC DNA]</scope>
</reference>
<reference key="2">
    <citation type="journal article" date="2003" name="Microbiol. Mol. Biol. Rev.">
        <title>Bacteriophage T4 genome.</title>
        <authorList>
            <person name="Miller E.S."/>
            <person name="Kutter E."/>
            <person name="Mosig G."/>
            <person name="Arisaka F."/>
            <person name="Kunisawa T."/>
            <person name="Ruger W."/>
        </authorList>
    </citation>
    <scope>NUCLEOTIDE SEQUENCE [LARGE SCALE GENOMIC DNA]</scope>
</reference>
<keyword id="KW-0255">Endonuclease</keyword>
<keyword id="KW-0378">Hydrolase</keyword>
<keyword id="KW-0460">Magnesium</keyword>
<keyword id="KW-0540">Nuclease</keyword>
<keyword id="KW-1185">Reference proteome</keyword>
<dbReference type="EC" id="3.1.-.-"/>
<dbReference type="EMBL" id="M69268">
    <property type="status" value="NOT_ANNOTATED_CDS"/>
    <property type="molecule type" value="Genomic_DNA"/>
</dbReference>
<dbReference type="EMBL" id="AF158101">
    <property type="protein sequence ID" value="AAD42654.1"/>
    <property type="molecule type" value="Genomic_DNA"/>
</dbReference>
<dbReference type="PIR" id="A46026">
    <property type="entry name" value="A46026"/>
</dbReference>
<dbReference type="RefSeq" id="NP_049657.1">
    <property type="nucleotide sequence ID" value="NC_000866.4"/>
</dbReference>
<dbReference type="REBASE" id="2955">
    <property type="entry name" value="F-TevI"/>
</dbReference>
<dbReference type="GeneID" id="1258777"/>
<dbReference type="KEGG" id="vg:1258777"/>
<dbReference type="OrthoDB" id="24971at10239"/>
<dbReference type="Proteomes" id="UP000009087">
    <property type="component" value="Segment"/>
</dbReference>
<dbReference type="GO" id="GO:0003677">
    <property type="term" value="F:DNA binding"/>
    <property type="evidence" value="ECO:0007669"/>
    <property type="project" value="InterPro"/>
</dbReference>
<dbReference type="GO" id="GO:0004519">
    <property type="term" value="F:endonuclease activity"/>
    <property type="evidence" value="ECO:0007669"/>
    <property type="project" value="UniProtKB-KW"/>
</dbReference>
<dbReference type="InterPro" id="IPR000305">
    <property type="entry name" value="GIY-YIG_endonuc"/>
</dbReference>
<dbReference type="InterPro" id="IPR035901">
    <property type="entry name" value="GIY-YIG_endonuc_sf"/>
</dbReference>
<dbReference type="InterPro" id="IPR003611">
    <property type="entry name" value="NUMOD3"/>
</dbReference>
<dbReference type="Pfam" id="PF01541">
    <property type="entry name" value="GIY-YIG"/>
    <property type="match status" value="1"/>
</dbReference>
<dbReference type="Pfam" id="PF07460">
    <property type="entry name" value="NUMOD3"/>
    <property type="match status" value="2"/>
</dbReference>
<dbReference type="SMART" id="SM00465">
    <property type="entry name" value="GIYc"/>
    <property type="match status" value="1"/>
</dbReference>
<dbReference type="SMART" id="SM00496">
    <property type="entry name" value="IENR2"/>
    <property type="match status" value="2"/>
</dbReference>
<dbReference type="SUPFAM" id="SSF82771">
    <property type="entry name" value="GIY-YIG endonuclease"/>
    <property type="match status" value="1"/>
</dbReference>
<dbReference type="PROSITE" id="PS50164">
    <property type="entry name" value="GIY_YIG"/>
    <property type="match status" value="1"/>
</dbReference>
<organism>
    <name type="scientific">Enterobacteria phage T4</name>
    <name type="common">Bacteriophage T4</name>
    <dbReference type="NCBI Taxonomy" id="10665"/>
    <lineage>
        <taxon>Viruses</taxon>
        <taxon>Duplodnaviria</taxon>
        <taxon>Heunggongvirae</taxon>
        <taxon>Uroviricota</taxon>
        <taxon>Caudoviricetes</taxon>
        <taxon>Straboviridae</taxon>
        <taxon>Tevenvirinae</taxon>
        <taxon>Tequatrovirus</taxon>
    </lineage>
</organism>
<name>SEGA_BPT4</name>